<reference key="1">
    <citation type="submission" date="2007-08" db="EMBL/GenBank/DDBJ databases">
        <title>Complete sequence of Thermotoga lettingae TMO.</title>
        <authorList>
            <consortium name="US DOE Joint Genome Institute"/>
            <person name="Copeland A."/>
            <person name="Lucas S."/>
            <person name="Lapidus A."/>
            <person name="Barry K."/>
            <person name="Glavina del Rio T."/>
            <person name="Dalin E."/>
            <person name="Tice H."/>
            <person name="Pitluck S."/>
            <person name="Foster B."/>
            <person name="Bruce D."/>
            <person name="Schmutz J."/>
            <person name="Larimer F."/>
            <person name="Land M."/>
            <person name="Hauser L."/>
            <person name="Kyrpides N."/>
            <person name="Mikhailova N."/>
            <person name="Nelson K."/>
            <person name="Gogarten J.P."/>
            <person name="Noll K."/>
            <person name="Richardson P."/>
        </authorList>
    </citation>
    <scope>NUCLEOTIDE SEQUENCE [LARGE SCALE GENOMIC DNA]</scope>
    <source>
        <strain>ATCC BAA-301 / DSM 14385 / NBRC 107922 / TMO</strain>
    </source>
</reference>
<feature type="chain" id="PRO_0000336874" description="UDP-N-acetylmuramate--L-alanine ligase">
    <location>
        <begin position="1"/>
        <end position="445"/>
    </location>
</feature>
<feature type="binding site" evidence="1">
    <location>
        <begin position="108"/>
        <end position="114"/>
    </location>
    <ligand>
        <name>ATP</name>
        <dbReference type="ChEBI" id="CHEBI:30616"/>
    </ligand>
</feature>
<evidence type="ECO:0000255" key="1">
    <source>
        <dbReference type="HAMAP-Rule" id="MF_00046"/>
    </source>
</evidence>
<dbReference type="EC" id="6.3.2.8" evidence="1"/>
<dbReference type="EMBL" id="CP000812">
    <property type="protein sequence ID" value="ABV33206.1"/>
    <property type="molecule type" value="Genomic_DNA"/>
</dbReference>
<dbReference type="RefSeq" id="WP_012002687.1">
    <property type="nucleotide sequence ID" value="NZ_BSDV01000001.1"/>
</dbReference>
<dbReference type="SMR" id="A8F4X2"/>
<dbReference type="STRING" id="416591.Tlet_0640"/>
<dbReference type="KEGG" id="tle:Tlet_0640"/>
<dbReference type="eggNOG" id="COG0773">
    <property type="taxonomic scope" value="Bacteria"/>
</dbReference>
<dbReference type="HOGENOM" id="CLU_028104_2_2_0"/>
<dbReference type="OrthoDB" id="9804126at2"/>
<dbReference type="UniPathway" id="UPA00219"/>
<dbReference type="Proteomes" id="UP000002016">
    <property type="component" value="Chromosome"/>
</dbReference>
<dbReference type="GO" id="GO:0005737">
    <property type="term" value="C:cytoplasm"/>
    <property type="evidence" value="ECO:0007669"/>
    <property type="project" value="UniProtKB-SubCell"/>
</dbReference>
<dbReference type="GO" id="GO:0005524">
    <property type="term" value="F:ATP binding"/>
    <property type="evidence" value="ECO:0007669"/>
    <property type="project" value="UniProtKB-UniRule"/>
</dbReference>
<dbReference type="GO" id="GO:0008763">
    <property type="term" value="F:UDP-N-acetylmuramate-L-alanine ligase activity"/>
    <property type="evidence" value="ECO:0007669"/>
    <property type="project" value="UniProtKB-UniRule"/>
</dbReference>
<dbReference type="GO" id="GO:0051301">
    <property type="term" value="P:cell division"/>
    <property type="evidence" value="ECO:0007669"/>
    <property type="project" value="UniProtKB-KW"/>
</dbReference>
<dbReference type="GO" id="GO:0071555">
    <property type="term" value="P:cell wall organization"/>
    <property type="evidence" value="ECO:0007669"/>
    <property type="project" value="UniProtKB-KW"/>
</dbReference>
<dbReference type="GO" id="GO:0009252">
    <property type="term" value="P:peptidoglycan biosynthetic process"/>
    <property type="evidence" value="ECO:0007669"/>
    <property type="project" value="UniProtKB-UniRule"/>
</dbReference>
<dbReference type="GO" id="GO:0008360">
    <property type="term" value="P:regulation of cell shape"/>
    <property type="evidence" value="ECO:0007669"/>
    <property type="project" value="UniProtKB-KW"/>
</dbReference>
<dbReference type="Gene3D" id="3.90.190.20">
    <property type="entry name" value="Mur ligase, C-terminal domain"/>
    <property type="match status" value="1"/>
</dbReference>
<dbReference type="Gene3D" id="3.40.1190.10">
    <property type="entry name" value="Mur-like, catalytic domain"/>
    <property type="match status" value="1"/>
</dbReference>
<dbReference type="Gene3D" id="3.40.50.720">
    <property type="entry name" value="NAD(P)-binding Rossmann-like Domain"/>
    <property type="match status" value="1"/>
</dbReference>
<dbReference type="HAMAP" id="MF_00046">
    <property type="entry name" value="MurC"/>
    <property type="match status" value="1"/>
</dbReference>
<dbReference type="InterPro" id="IPR036565">
    <property type="entry name" value="Mur-like_cat_sf"/>
</dbReference>
<dbReference type="InterPro" id="IPR004101">
    <property type="entry name" value="Mur_ligase_C"/>
</dbReference>
<dbReference type="InterPro" id="IPR036615">
    <property type="entry name" value="Mur_ligase_C_dom_sf"/>
</dbReference>
<dbReference type="InterPro" id="IPR013221">
    <property type="entry name" value="Mur_ligase_cen"/>
</dbReference>
<dbReference type="InterPro" id="IPR000713">
    <property type="entry name" value="Mur_ligase_N"/>
</dbReference>
<dbReference type="InterPro" id="IPR050061">
    <property type="entry name" value="MurCDEF_pg_biosynth"/>
</dbReference>
<dbReference type="InterPro" id="IPR005758">
    <property type="entry name" value="UDP-N-AcMur_Ala_ligase_MurC"/>
</dbReference>
<dbReference type="NCBIfam" id="TIGR01082">
    <property type="entry name" value="murC"/>
    <property type="match status" value="1"/>
</dbReference>
<dbReference type="PANTHER" id="PTHR43445:SF3">
    <property type="entry name" value="UDP-N-ACETYLMURAMATE--L-ALANINE LIGASE"/>
    <property type="match status" value="1"/>
</dbReference>
<dbReference type="PANTHER" id="PTHR43445">
    <property type="entry name" value="UDP-N-ACETYLMURAMATE--L-ALANINE LIGASE-RELATED"/>
    <property type="match status" value="1"/>
</dbReference>
<dbReference type="Pfam" id="PF01225">
    <property type="entry name" value="Mur_ligase"/>
    <property type="match status" value="1"/>
</dbReference>
<dbReference type="Pfam" id="PF02875">
    <property type="entry name" value="Mur_ligase_C"/>
    <property type="match status" value="1"/>
</dbReference>
<dbReference type="Pfam" id="PF08245">
    <property type="entry name" value="Mur_ligase_M"/>
    <property type="match status" value="1"/>
</dbReference>
<dbReference type="SUPFAM" id="SSF51984">
    <property type="entry name" value="MurCD N-terminal domain"/>
    <property type="match status" value="1"/>
</dbReference>
<dbReference type="SUPFAM" id="SSF53623">
    <property type="entry name" value="MurD-like peptide ligases, catalytic domain"/>
    <property type="match status" value="1"/>
</dbReference>
<dbReference type="SUPFAM" id="SSF53244">
    <property type="entry name" value="MurD-like peptide ligases, peptide-binding domain"/>
    <property type="match status" value="1"/>
</dbReference>
<protein>
    <recommendedName>
        <fullName evidence="1">UDP-N-acetylmuramate--L-alanine ligase</fullName>
        <ecNumber evidence="1">6.3.2.8</ecNumber>
    </recommendedName>
    <alternativeName>
        <fullName evidence="1">UDP-N-acetylmuramoyl-L-alanine synthetase</fullName>
    </alternativeName>
</protein>
<organism>
    <name type="scientific">Pseudothermotoga lettingae (strain ATCC BAA-301 / DSM 14385 / NBRC 107922 / TMO)</name>
    <name type="common">Thermotoga lettingae</name>
    <dbReference type="NCBI Taxonomy" id="416591"/>
    <lineage>
        <taxon>Bacteria</taxon>
        <taxon>Thermotogati</taxon>
        <taxon>Thermotogota</taxon>
        <taxon>Thermotogae</taxon>
        <taxon>Thermotogales</taxon>
        <taxon>Thermotogaceae</taxon>
        <taxon>Pseudothermotoga</taxon>
    </lineage>
</organism>
<name>MURC_PSELT</name>
<accession>A8F4X2</accession>
<sequence length="445" mass="50557">MRIHFVGIGGIGMSSLALHSRLIGEDVYGSDIYESEQTEILRKLGVKIFIGHNYNNWLYPDIVVHTPAVHSDNPEIIRARSNGIRVVSRFEFLYDILNNGKTQFAVTGSDGKTTTTAMLAHCLKVLGEDPTVFLGGIHRSLEFGNYRPGKGPYVYELDESQPEFSRFSPDYMIITNARGDHLENYSGDRQLYRDCFRSVVMSTRKSVVTFSEDENTSDLGTWTFGKSINSTCRLIDRNRNGLFQFAKIEINGKEYNLTLKVPGEHNILNAMAVITLLWSAGHEVEEVLKALEDFTGTYRRFTVTVIDEKRKVYMIDDYAHTPDEIKSLLSTTREVFPSQKRVVIFQPHRYSRLMREDGNFAKALKDADEIYITEVYSAFEQTIPQISSKVIADGLVSYGKKAQYVADADLLIENFQLQENTIYLFVGAGDIIRISQKFAKMHAKK</sequence>
<gene>
    <name evidence="1" type="primary">murC</name>
    <name type="ordered locus">Tlet_0640</name>
</gene>
<proteinExistence type="inferred from homology"/>
<keyword id="KW-0067">ATP-binding</keyword>
<keyword id="KW-0131">Cell cycle</keyword>
<keyword id="KW-0132">Cell division</keyword>
<keyword id="KW-0133">Cell shape</keyword>
<keyword id="KW-0961">Cell wall biogenesis/degradation</keyword>
<keyword id="KW-0963">Cytoplasm</keyword>
<keyword id="KW-0436">Ligase</keyword>
<keyword id="KW-0547">Nucleotide-binding</keyword>
<keyword id="KW-0573">Peptidoglycan synthesis</keyword>
<keyword id="KW-1185">Reference proteome</keyword>
<comment type="function">
    <text evidence="1">Cell wall formation.</text>
</comment>
<comment type="catalytic activity">
    <reaction evidence="1">
        <text>UDP-N-acetyl-alpha-D-muramate + L-alanine + ATP = UDP-N-acetyl-alpha-D-muramoyl-L-alanine + ADP + phosphate + H(+)</text>
        <dbReference type="Rhea" id="RHEA:23372"/>
        <dbReference type="ChEBI" id="CHEBI:15378"/>
        <dbReference type="ChEBI" id="CHEBI:30616"/>
        <dbReference type="ChEBI" id="CHEBI:43474"/>
        <dbReference type="ChEBI" id="CHEBI:57972"/>
        <dbReference type="ChEBI" id="CHEBI:70757"/>
        <dbReference type="ChEBI" id="CHEBI:83898"/>
        <dbReference type="ChEBI" id="CHEBI:456216"/>
        <dbReference type="EC" id="6.3.2.8"/>
    </reaction>
</comment>
<comment type="pathway">
    <text evidence="1">Cell wall biogenesis; peptidoglycan biosynthesis.</text>
</comment>
<comment type="subcellular location">
    <subcellularLocation>
        <location evidence="1">Cytoplasm</location>
    </subcellularLocation>
</comment>
<comment type="similarity">
    <text evidence="1">Belongs to the MurCDEF family.</text>
</comment>